<comment type="function">
    <text evidence="1">Exhibits a very high intrinsic GTPase hydrolysis rate. Involved in the addition of a carboxymethylaminomethyl (cmnm) group at the wobble position (U34) of certain tRNAs, forming tRNA-cmnm(5)s(2)U34.</text>
</comment>
<comment type="cofactor">
    <cofactor evidence="1">
        <name>K(+)</name>
        <dbReference type="ChEBI" id="CHEBI:29103"/>
    </cofactor>
    <text evidence="1">Binds 1 potassium ion per subunit.</text>
</comment>
<comment type="subunit">
    <text evidence="1">Homodimer. Heterotetramer of two MnmE and two MnmG subunits.</text>
</comment>
<comment type="subcellular location">
    <subcellularLocation>
        <location evidence="1">Cytoplasm</location>
    </subcellularLocation>
</comment>
<comment type="similarity">
    <text evidence="1">Belongs to the TRAFAC class TrmE-Era-EngA-EngB-Septin-like GTPase superfamily. TrmE GTPase family.</text>
</comment>
<gene>
    <name evidence="1" type="primary">mnmE</name>
    <name evidence="1" type="synonym">trmE</name>
    <name type="ordered locus">CJJ81176_0979</name>
</gene>
<sequence>MSDTIAAIATAHGVGSISIVRLSGERALEFALKLSHKTKLTPRHATFTKLFNQNNEIIDEAIMIYFKAPYSFTGEDIVEFQTHGGFSVSEVLLEELVSLGARLALAGEFSKRACLNGKMTPLKALNIQDLILSKSALAAKIIARNMQGNLGELLEKIRTDLVKTLAFVETSIDYADDDLPSDLLEQISTMCEENSKILKEIYTLSQSKKGLIEGFKIAIVGKPNVGKSSLLNALLSYERAIVSDIAGTTRDTIEENFKLGTHLLRIIDTAGIRESKDVIEQIGVALSKKSLEDADIILAVFDASRVQDKEDEKIFDLLANTDKKIFWILNKSDLENVFKNTQNKNFIKLSAQKDITLLKEELQNYLNSFDSEGIMVSSLDLINACKISSEAIFRAKGLLEESSLELFAFELNLAINELARFTKDFQRDEILDEMFGNFCLGK</sequence>
<accession>A1VZU7</accession>
<proteinExistence type="inferred from homology"/>
<organism>
    <name type="scientific">Campylobacter jejuni subsp. jejuni serotype O:23/36 (strain 81-176)</name>
    <dbReference type="NCBI Taxonomy" id="354242"/>
    <lineage>
        <taxon>Bacteria</taxon>
        <taxon>Pseudomonadati</taxon>
        <taxon>Campylobacterota</taxon>
        <taxon>Epsilonproteobacteria</taxon>
        <taxon>Campylobacterales</taxon>
        <taxon>Campylobacteraceae</taxon>
        <taxon>Campylobacter</taxon>
    </lineage>
</organism>
<evidence type="ECO:0000255" key="1">
    <source>
        <dbReference type="HAMAP-Rule" id="MF_00379"/>
    </source>
</evidence>
<feature type="chain" id="PRO_1000048810" description="tRNA modification GTPase MnmE">
    <location>
        <begin position="1"/>
        <end position="442"/>
    </location>
</feature>
<feature type="domain" description="TrmE-type G">
    <location>
        <begin position="214"/>
        <end position="367"/>
    </location>
</feature>
<feature type="binding site" evidence="1">
    <location>
        <position position="21"/>
    </location>
    <ligand>
        <name>(6S)-5-formyl-5,6,7,8-tetrahydrofolate</name>
        <dbReference type="ChEBI" id="CHEBI:57457"/>
    </ligand>
</feature>
<feature type="binding site" evidence="1">
    <location>
        <position position="79"/>
    </location>
    <ligand>
        <name>(6S)-5-formyl-5,6,7,8-tetrahydrofolate</name>
        <dbReference type="ChEBI" id="CHEBI:57457"/>
    </ligand>
</feature>
<feature type="binding site" evidence="1">
    <location>
        <position position="118"/>
    </location>
    <ligand>
        <name>(6S)-5-formyl-5,6,7,8-tetrahydrofolate</name>
        <dbReference type="ChEBI" id="CHEBI:57457"/>
    </ligand>
</feature>
<feature type="binding site" evidence="1">
    <location>
        <begin position="224"/>
        <end position="229"/>
    </location>
    <ligand>
        <name>GTP</name>
        <dbReference type="ChEBI" id="CHEBI:37565"/>
    </ligand>
</feature>
<feature type="binding site" evidence="1">
    <location>
        <position position="224"/>
    </location>
    <ligand>
        <name>K(+)</name>
        <dbReference type="ChEBI" id="CHEBI:29103"/>
    </ligand>
</feature>
<feature type="binding site" evidence="1">
    <location>
        <position position="228"/>
    </location>
    <ligand>
        <name>Mg(2+)</name>
        <dbReference type="ChEBI" id="CHEBI:18420"/>
    </ligand>
</feature>
<feature type="binding site" evidence="1">
    <location>
        <begin position="243"/>
        <end position="249"/>
    </location>
    <ligand>
        <name>GTP</name>
        <dbReference type="ChEBI" id="CHEBI:37565"/>
    </ligand>
</feature>
<feature type="binding site" evidence="1">
    <location>
        <position position="243"/>
    </location>
    <ligand>
        <name>K(+)</name>
        <dbReference type="ChEBI" id="CHEBI:29103"/>
    </ligand>
</feature>
<feature type="binding site" evidence="1">
    <location>
        <position position="245"/>
    </location>
    <ligand>
        <name>K(+)</name>
        <dbReference type="ChEBI" id="CHEBI:29103"/>
    </ligand>
</feature>
<feature type="binding site" evidence="1">
    <location>
        <position position="248"/>
    </location>
    <ligand>
        <name>K(+)</name>
        <dbReference type="ChEBI" id="CHEBI:29103"/>
    </ligand>
</feature>
<feature type="binding site" evidence="1">
    <location>
        <position position="249"/>
    </location>
    <ligand>
        <name>Mg(2+)</name>
        <dbReference type="ChEBI" id="CHEBI:18420"/>
    </ligand>
</feature>
<feature type="binding site" evidence="1">
    <location>
        <begin position="268"/>
        <end position="271"/>
    </location>
    <ligand>
        <name>GTP</name>
        <dbReference type="ChEBI" id="CHEBI:37565"/>
    </ligand>
</feature>
<feature type="binding site" evidence="1">
    <location>
        <position position="442"/>
    </location>
    <ligand>
        <name>(6S)-5-formyl-5,6,7,8-tetrahydrofolate</name>
        <dbReference type="ChEBI" id="CHEBI:57457"/>
    </ligand>
</feature>
<protein>
    <recommendedName>
        <fullName evidence="1">tRNA modification GTPase MnmE</fullName>
        <ecNumber evidence="1">3.6.-.-</ecNumber>
    </recommendedName>
</protein>
<reference key="1">
    <citation type="submission" date="2006-12" db="EMBL/GenBank/DDBJ databases">
        <authorList>
            <person name="Fouts D.E."/>
            <person name="Nelson K.E."/>
            <person name="Sebastian Y."/>
        </authorList>
    </citation>
    <scope>NUCLEOTIDE SEQUENCE [LARGE SCALE GENOMIC DNA]</scope>
    <source>
        <strain>81-176</strain>
    </source>
</reference>
<dbReference type="EC" id="3.6.-.-" evidence="1"/>
<dbReference type="EMBL" id="CP000538">
    <property type="protein sequence ID" value="EAQ71850.1"/>
    <property type="molecule type" value="Genomic_DNA"/>
</dbReference>
<dbReference type="RefSeq" id="WP_002868965.1">
    <property type="nucleotide sequence ID" value="NC_008787.1"/>
</dbReference>
<dbReference type="SMR" id="A1VZU7"/>
<dbReference type="KEGG" id="cjj:CJJ81176_0979"/>
<dbReference type="eggNOG" id="COG0486">
    <property type="taxonomic scope" value="Bacteria"/>
</dbReference>
<dbReference type="HOGENOM" id="CLU_019624_4_1_7"/>
<dbReference type="Proteomes" id="UP000000646">
    <property type="component" value="Chromosome"/>
</dbReference>
<dbReference type="GO" id="GO:0005829">
    <property type="term" value="C:cytosol"/>
    <property type="evidence" value="ECO:0007669"/>
    <property type="project" value="TreeGrafter"/>
</dbReference>
<dbReference type="GO" id="GO:0005525">
    <property type="term" value="F:GTP binding"/>
    <property type="evidence" value="ECO:0007669"/>
    <property type="project" value="UniProtKB-UniRule"/>
</dbReference>
<dbReference type="GO" id="GO:0003924">
    <property type="term" value="F:GTPase activity"/>
    <property type="evidence" value="ECO:0007669"/>
    <property type="project" value="UniProtKB-UniRule"/>
</dbReference>
<dbReference type="GO" id="GO:0046872">
    <property type="term" value="F:metal ion binding"/>
    <property type="evidence" value="ECO:0007669"/>
    <property type="project" value="UniProtKB-KW"/>
</dbReference>
<dbReference type="GO" id="GO:0030488">
    <property type="term" value="P:tRNA methylation"/>
    <property type="evidence" value="ECO:0007669"/>
    <property type="project" value="TreeGrafter"/>
</dbReference>
<dbReference type="GO" id="GO:0002098">
    <property type="term" value="P:tRNA wobble uridine modification"/>
    <property type="evidence" value="ECO:0007669"/>
    <property type="project" value="TreeGrafter"/>
</dbReference>
<dbReference type="CDD" id="cd04164">
    <property type="entry name" value="trmE"/>
    <property type="match status" value="1"/>
</dbReference>
<dbReference type="CDD" id="cd14858">
    <property type="entry name" value="TrmE_N"/>
    <property type="match status" value="1"/>
</dbReference>
<dbReference type="FunFam" id="3.40.50.300:FF:001376">
    <property type="entry name" value="tRNA modification GTPase MnmE"/>
    <property type="match status" value="1"/>
</dbReference>
<dbReference type="Gene3D" id="3.40.50.300">
    <property type="entry name" value="P-loop containing nucleotide triphosphate hydrolases"/>
    <property type="match status" value="1"/>
</dbReference>
<dbReference type="Gene3D" id="3.30.1360.120">
    <property type="entry name" value="Probable tRNA modification gtpase trme, domain 1"/>
    <property type="match status" value="1"/>
</dbReference>
<dbReference type="Gene3D" id="1.20.120.430">
    <property type="entry name" value="tRNA modification GTPase MnmE domain 2"/>
    <property type="match status" value="1"/>
</dbReference>
<dbReference type="HAMAP" id="MF_00379">
    <property type="entry name" value="GTPase_MnmE"/>
    <property type="match status" value="1"/>
</dbReference>
<dbReference type="InterPro" id="IPR031168">
    <property type="entry name" value="G_TrmE"/>
</dbReference>
<dbReference type="InterPro" id="IPR006073">
    <property type="entry name" value="GTP-bd"/>
</dbReference>
<dbReference type="InterPro" id="IPR018948">
    <property type="entry name" value="GTP-bd_TrmE_N"/>
</dbReference>
<dbReference type="InterPro" id="IPR004520">
    <property type="entry name" value="GTPase_MnmE"/>
</dbReference>
<dbReference type="InterPro" id="IPR027368">
    <property type="entry name" value="MnmE_dom2"/>
</dbReference>
<dbReference type="InterPro" id="IPR025867">
    <property type="entry name" value="MnmE_helical"/>
</dbReference>
<dbReference type="InterPro" id="IPR027417">
    <property type="entry name" value="P-loop_NTPase"/>
</dbReference>
<dbReference type="InterPro" id="IPR005225">
    <property type="entry name" value="Small_GTP-bd"/>
</dbReference>
<dbReference type="InterPro" id="IPR027266">
    <property type="entry name" value="TrmE/GcvT_dom1"/>
</dbReference>
<dbReference type="NCBIfam" id="TIGR00450">
    <property type="entry name" value="mnmE_trmE_thdF"/>
    <property type="match status" value="1"/>
</dbReference>
<dbReference type="NCBIfam" id="TIGR00231">
    <property type="entry name" value="small_GTP"/>
    <property type="match status" value="1"/>
</dbReference>
<dbReference type="PANTHER" id="PTHR42714">
    <property type="entry name" value="TRNA MODIFICATION GTPASE GTPBP3"/>
    <property type="match status" value="1"/>
</dbReference>
<dbReference type="PANTHER" id="PTHR42714:SF2">
    <property type="entry name" value="TRNA MODIFICATION GTPASE GTPBP3, MITOCHONDRIAL"/>
    <property type="match status" value="1"/>
</dbReference>
<dbReference type="Pfam" id="PF01926">
    <property type="entry name" value="MMR_HSR1"/>
    <property type="match status" value="1"/>
</dbReference>
<dbReference type="Pfam" id="PF12631">
    <property type="entry name" value="MnmE_helical"/>
    <property type="match status" value="1"/>
</dbReference>
<dbReference type="Pfam" id="PF10396">
    <property type="entry name" value="TrmE_N"/>
    <property type="match status" value="1"/>
</dbReference>
<dbReference type="SUPFAM" id="SSF103025">
    <property type="entry name" value="Folate-binding domain"/>
    <property type="match status" value="1"/>
</dbReference>
<dbReference type="SUPFAM" id="SSF52540">
    <property type="entry name" value="P-loop containing nucleoside triphosphate hydrolases"/>
    <property type="match status" value="1"/>
</dbReference>
<dbReference type="PROSITE" id="PS51709">
    <property type="entry name" value="G_TRME"/>
    <property type="match status" value="1"/>
</dbReference>
<keyword id="KW-0963">Cytoplasm</keyword>
<keyword id="KW-0342">GTP-binding</keyword>
<keyword id="KW-0378">Hydrolase</keyword>
<keyword id="KW-0460">Magnesium</keyword>
<keyword id="KW-0479">Metal-binding</keyword>
<keyword id="KW-0547">Nucleotide-binding</keyword>
<keyword id="KW-0630">Potassium</keyword>
<keyword id="KW-0819">tRNA processing</keyword>
<name>MNME_CAMJJ</name>